<accession>Q88W76</accession>
<accession>F9UPC7</accession>
<protein>
    <recommendedName>
        <fullName evidence="1">Formate--tetrahydrofolate ligase</fullName>
        <ecNumber evidence="1">6.3.4.3</ecNumber>
    </recommendedName>
    <alternativeName>
        <fullName evidence="1">Formyltetrahydrofolate synthetase</fullName>
        <shortName evidence="1">FHS</shortName>
        <shortName evidence="1">FTHFS</shortName>
    </alternativeName>
</protein>
<evidence type="ECO:0000255" key="1">
    <source>
        <dbReference type="HAMAP-Rule" id="MF_01543"/>
    </source>
</evidence>
<gene>
    <name evidence="1" type="primary">fhs</name>
    <name type="ordered locus">lp_1779</name>
</gene>
<organism>
    <name type="scientific">Lactiplantibacillus plantarum (strain ATCC BAA-793 / NCIMB 8826 / WCFS1)</name>
    <name type="common">Lactobacillus plantarum</name>
    <dbReference type="NCBI Taxonomy" id="220668"/>
    <lineage>
        <taxon>Bacteria</taxon>
        <taxon>Bacillati</taxon>
        <taxon>Bacillota</taxon>
        <taxon>Bacilli</taxon>
        <taxon>Lactobacillales</taxon>
        <taxon>Lactobacillaceae</taxon>
        <taxon>Lactiplantibacillus</taxon>
    </lineage>
</organism>
<keyword id="KW-0067">ATP-binding</keyword>
<keyword id="KW-0436">Ligase</keyword>
<keyword id="KW-0547">Nucleotide-binding</keyword>
<keyword id="KW-0554">One-carbon metabolism</keyword>
<keyword id="KW-1185">Reference proteome</keyword>
<reference key="1">
    <citation type="journal article" date="2003" name="Proc. Natl. Acad. Sci. U.S.A.">
        <title>Complete genome sequence of Lactobacillus plantarum WCFS1.</title>
        <authorList>
            <person name="Kleerebezem M."/>
            <person name="Boekhorst J."/>
            <person name="van Kranenburg R."/>
            <person name="Molenaar D."/>
            <person name="Kuipers O.P."/>
            <person name="Leer R."/>
            <person name="Tarchini R."/>
            <person name="Peters S.A."/>
            <person name="Sandbrink H.M."/>
            <person name="Fiers M.W.E.J."/>
            <person name="Stiekema W."/>
            <person name="Klein Lankhorst R.M."/>
            <person name="Bron P.A."/>
            <person name="Hoffer S.M."/>
            <person name="Nierop Groot M.N."/>
            <person name="Kerkhoven R."/>
            <person name="De Vries M."/>
            <person name="Ursing B."/>
            <person name="De Vos W.M."/>
            <person name="Siezen R.J."/>
        </authorList>
    </citation>
    <scope>NUCLEOTIDE SEQUENCE [LARGE SCALE GENOMIC DNA]</scope>
    <source>
        <strain>ATCC BAA-793 / NCIMB 8826 / WCFS1</strain>
    </source>
</reference>
<reference key="2">
    <citation type="journal article" date="2012" name="J. Bacteriol.">
        <title>Complete resequencing and reannotation of the Lactobacillus plantarum WCFS1 genome.</title>
        <authorList>
            <person name="Siezen R.J."/>
            <person name="Francke C."/>
            <person name="Renckens B."/>
            <person name="Boekhorst J."/>
            <person name="Wels M."/>
            <person name="Kleerebezem M."/>
            <person name="van Hijum S.A."/>
        </authorList>
    </citation>
    <scope>NUCLEOTIDE SEQUENCE [LARGE SCALE GENOMIC DNA]</scope>
    <scope>GENOME REANNOTATION</scope>
    <source>
        <strain>ATCC BAA-793 / NCIMB 8826 / WCFS1</strain>
    </source>
</reference>
<sequence>MKDIEIAQQVTPEPITAIAAKAGLTVDQIDQYGSTKAKLKLPLPVKKTQRNLILVTSINPTPAGEGKSTVTIGLGDALTKIGKSTMIALREPSLGPVMGMKGGATGGGYSQVIPMEDINLHFTGDMHALTAANNTLAALIDNHIQQGNQLGIDQRRIQWKRALDINDRALRHTVIGLGGATSGVPREDGFDITVASELMAILCLSENIADLKQRVNRIVIGYTHDRQPVTVADLNVGGAITLLLKDALRPNLVQTLAHTPALVHGGPFANIAHGCNSVLATQAGLNLADYTVTEAGFGADLGGQKFMDINVPAVGQAPNAVVIVATIRALKLHGGVALQDLATENVAALKAGAANLGHHIHAMQRYGVPVVVAINEFTADTDAEIHAVKDYCADLGVDAVLADVWGRGGDGATDLAAAVVDLCAQPSHFQPLSPADADLKTKINDIVTKTYGGANVEYSAKAQRQLRTFAKQGWDHLPVCMAKTQYSLSDDPKRLGAPTGFTINVREFVPKLGAGFIVALTGNVLTMPGLPKHPAALDMDISDDGKISGLF</sequence>
<comment type="catalytic activity">
    <reaction evidence="1">
        <text>(6S)-5,6,7,8-tetrahydrofolate + formate + ATP = (6R)-10-formyltetrahydrofolate + ADP + phosphate</text>
        <dbReference type="Rhea" id="RHEA:20221"/>
        <dbReference type="ChEBI" id="CHEBI:15740"/>
        <dbReference type="ChEBI" id="CHEBI:30616"/>
        <dbReference type="ChEBI" id="CHEBI:43474"/>
        <dbReference type="ChEBI" id="CHEBI:57453"/>
        <dbReference type="ChEBI" id="CHEBI:195366"/>
        <dbReference type="ChEBI" id="CHEBI:456216"/>
        <dbReference type="EC" id="6.3.4.3"/>
    </reaction>
</comment>
<comment type="pathway">
    <text evidence="1">One-carbon metabolism; tetrahydrofolate interconversion.</text>
</comment>
<comment type="similarity">
    <text evidence="1">Belongs to the formate--tetrahydrofolate ligase family.</text>
</comment>
<dbReference type="EC" id="6.3.4.3" evidence="1"/>
<dbReference type="EMBL" id="AL935263">
    <property type="protein sequence ID" value="CCC79066.1"/>
    <property type="molecule type" value="Genomic_DNA"/>
</dbReference>
<dbReference type="RefSeq" id="WP_011101546.1">
    <property type="nucleotide sequence ID" value="NC_004567.2"/>
</dbReference>
<dbReference type="RefSeq" id="YP_004889580.1">
    <property type="nucleotide sequence ID" value="NC_004567.2"/>
</dbReference>
<dbReference type="SMR" id="Q88W76"/>
<dbReference type="STRING" id="220668.lp_1779"/>
<dbReference type="EnsemblBacteria" id="CCC79066">
    <property type="protein sequence ID" value="CCC79066"/>
    <property type="gene ID" value="lp_1779"/>
</dbReference>
<dbReference type="KEGG" id="lpl:lp_1779"/>
<dbReference type="PATRIC" id="fig|220668.9.peg.1500"/>
<dbReference type="eggNOG" id="COG2759">
    <property type="taxonomic scope" value="Bacteria"/>
</dbReference>
<dbReference type="HOGENOM" id="CLU_003601_3_3_9"/>
<dbReference type="OrthoDB" id="9761733at2"/>
<dbReference type="PhylomeDB" id="Q88W76"/>
<dbReference type="UniPathway" id="UPA00193"/>
<dbReference type="Proteomes" id="UP000000432">
    <property type="component" value="Chromosome"/>
</dbReference>
<dbReference type="GO" id="GO:0005524">
    <property type="term" value="F:ATP binding"/>
    <property type="evidence" value="ECO:0007669"/>
    <property type="project" value="UniProtKB-UniRule"/>
</dbReference>
<dbReference type="GO" id="GO:0004329">
    <property type="term" value="F:formate-tetrahydrofolate ligase activity"/>
    <property type="evidence" value="ECO:0007669"/>
    <property type="project" value="UniProtKB-UniRule"/>
</dbReference>
<dbReference type="GO" id="GO:0035999">
    <property type="term" value="P:tetrahydrofolate interconversion"/>
    <property type="evidence" value="ECO:0007669"/>
    <property type="project" value="UniProtKB-UniRule"/>
</dbReference>
<dbReference type="CDD" id="cd00477">
    <property type="entry name" value="FTHFS"/>
    <property type="match status" value="1"/>
</dbReference>
<dbReference type="FunFam" id="3.30.1510.10:FF:000001">
    <property type="entry name" value="Formate--tetrahydrofolate ligase"/>
    <property type="match status" value="1"/>
</dbReference>
<dbReference type="FunFam" id="3.10.410.10:FF:000001">
    <property type="entry name" value="Putative formate--tetrahydrofolate ligase"/>
    <property type="match status" value="1"/>
</dbReference>
<dbReference type="Gene3D" id="3.30.1510.10">
    <property type="entry name" value="Domain 2, N(10)-formyltetrahydrofolate synthetase"/>
    <property type="match status" value="1"/>
</dbReference>
<dbReference type="Gene3D" id="3.10.410.10">
    <property type="entry name" value="Formyltetrahydrofolate synthetase, domain 3"/>
    <property type="match status" value="1"/>
</dbReference>
<dbReference type="Gene3D" id="3.40.50.300">
    <property type="entry name" value="P-loop containing nucleotide triphosphate hydrolases"/>
    <property type="match status" value="1"/>
</dbReference>
<dbReference type="HAMAP" id="MF_01543">
    <property type="entry name" value="FTHFS"/>
    <property type="match status" value="1"/>
</dbReference>
<dbReference type="InterPro" id="IPR000559">
    <property type="entry name" value="Formate_THF_ligase"/>
</dbReference>
<dbReference type="InterPro" id="IPR020628">
    <property type="entry name" value="Formate_THF_ligase_CS"/>
</dbReference>
<dbReference type="InterPro" id="IPR027417">
    <property type="entry name" value="P-loop_NTPase"/>
</dbReference>
<dbReference type="NCBIfam" id="NF010030">
    <property type="entry name" value="PRK13505.1"/>
    <property type="match status" value="1"/>
</dbReference>
<dbReference type="Pfam" id="PF01268">
    <property type="entry name" value="FTHFS"/>
    <property type="match status" value="1"/>
</dbReference>
<dbReference type="SUPFAM" id="SSF52540">
    <property type="entry name" value="P-loop containing nucleoside triphosphate hydrolases"/>
    <property type="match status" value="1"/>
</dbReference>
<dbReference type="PROSITE" id="PS00721">
    <property type="entry name" value="FTHFS_1"/>
    <property type="match status" value="1"/>
</dbReference>
<dbReference type="PROSITE" id="PS00722">
    <property type="entry name" value="FTHFS_2"/>
    <property type="match status" value="1"/>
</dbReference>
<name>FTHS_LACPL</name>
<feature type="chain" id="PRO_0000199354" description="Formate--tetrahydrofolate ligase">
    <location>
        <begin position="1"/>
        <end position="551"/>
    </location>
</feature>
<feature type="binding site" evidence="1">
    <location>
        <begin position="61"/>
        <end position="68"/>
    </location>
    <ligand>
        <name>ATP</name>
        <dbReference type="ChEBI" id="CHEBI:30616"/>
    </ligand>
</feature>
<proteinExistence type="inferred from homology"/>